<evidence type="ECO:0000250" key="1"/>
<evidence type="ECO:0000255" key="2"/>
<evidence type="ECO:0000305" key="3"/>
<proteinExistence type="inferred from homology"/>
<name>M2OM_NEUCR</name>
<keyword id="KW-0472">Membrane</keyword>
<keyword id="KW-0496">Mitochondrion</keyword>
<keyword id="KW-0999">Mitochondrion inner membrane</keyword>
<keyword id="KW-1185">Reference proteome</keyword>
<keyword id="KW-0677">Repeat</keyword>
<keyword id="KW-0812">Transmembrane</keyword>
<keyword id="KW-1133">Transmembrane helix</keyword>
<keyword id="KW-0813">Transport</keyword>
<reference key="1">
    <citation type="journal article" date="2003" name="Nature">
        <title>The genome sequence of the filamentous fungus Neurospora crassa.</title>
        <authorList>
            <person name="Galagan J.E."/>
            <person name="Calvo S.E."/>
            <person name="Borkovich K.A."/>
            <person name="Selker E.U."/>
            <person name="Read N.D."/>
            <person name="Jaffe D.B."/>
            <person name="FitzHugh W."/>
            <person name="Ma L.-J."/>
            <person name="Smirnov S."/>
            <person name="Purcell S."/>
            <person name="Rehman B."/>
            <person name="Elkins T."/>
            <person name="Engels R."/>
            <person name="Wang S."/>
            <person name="Nielsen C.B."/>
            <person name="Butler J."/>
            <person name="Endrizzi M."/>
            <person name="Qui D."/>
            <person name="Ianakiev P."/>
            <person name="Bell-Pedersen D."/>
            <person name="Nelson M.A."/>
            <person name="Werner-Washburne M."/>
            <person name="Selitrennikoff C.P."/>
            <person name="Kinsey J.A."/>
            <person name="Braun E.L."/>
            <person name="Zelter A."/>
            <person name="Schulte U."/>
            <person name="Kothe G.O."/>
            <person name="Jedd G."/>
            <person name="Mewes H.-W."/>
            <person name="Staben C."/>
            <person name="Marcotte E."/>
            <person name="Greenberg D."/>
            <person name="Roy A."/>
            <person name="Foley K."/>
            <person name="Naylor J."/>
            <person name="Stange-Thomann N."/>
            <person name="Barrett R."/>
            <person name="Gnerre S."/>
            <person name="Kamal M."/>
            <person name="Kamvysselis M."/>
            <person name="Mauceli E.W."/>
            <person name="Bielke C."/>
            <person name="Rudd S."/>
            <person name="Frishman D."/>
            <person name="Krystofova S."/>
            <person name="Rasmussen C."/>
            <person name="Metzenberg R.L."/>
            <person name="Perkins D.D."/>
            <person name="Kroken S."/>
            <person name="Cogoni C."/>
            <person name="Macino G."/>
            <person name="Catcheside D.E.A."/>
            <person name="Li W."/>
            <person name="Pratt R.J."/>
            <person name="Osmani S.A."/>
            <person name="DeSouza C.P.C."/>
            <person name="Glass N.L."/>
            <person name="Orbach M.J."/>
            <person name="Berglund J.A."/>
            <person name="Voelker R."/>
            <person name="Yarden O."/>
            <person name="Plamann M."/>
            <person name="Seiler S."/>
            <person name="Dunlap J.C."/>
            <person name="Radford A."/>
            <person name="Aramayo R."/>
            <person name="Natvig D.O."/>
            <person name="Alex L.A."/>
            <person name="Mannhaupt G."/>
            <person name="Ebbole D.J."/>
            <person name="Freitag M."/>
            <person name="Paulsen I."/>
            <person name="Sachs M.S."/>
            <person name="Lander E.S."/>
            <person name="Nusbaum C."/>
            <person name="Birren B.W."/>
        </authorList>
    </citation>
    <scope>NUCLEOTIDE SEQUENCE [LARGE SCALE GENOMIC DNA]</scope>
    <source>
        <strain>ATCC 24698 / 74-OR23-1A / CBS 708.71 / DSM 1257 / FGSC 987</strain>
    </source>
</reference>
<comment type="function">
    <text evidence="1">Catalyzes the transport of 2-oxoglutarate across the inner mitochondrial membrane.</text>
</comment>
<comment type="subcellular location">
    <subcellularLocation>
        <location evidence="1">Mitochondrion inner membrane</location>
        <topology evidence="1">Multi-pass membrane protein</topology>
    </subcellularLocation>
</comment>
<comment type="similarity">
    <text evidence="3">Belongs to the mitochondrial carrier (TC 2.A.29) family.</text>
</comment>
<protein>
    <recommendedName>
        <fullName>Putative mitochondrial 2-oxoglutarate/malate carrier protein</fullName>
        <shortName>OGCP</shortName>
    </recommendedName>
    <alternativeName>
        <fullName>Mitochondrial carrier 33</fullName>
    </alternativeName>
</protein>
<sequence length="331" mass="35047">MSSVKQSAQAATSDVVDTAKNATAETVTAATDFLHTPAVRAALPFINGGLSGMVATTVIQPIDMIKVRIQLAGEGKAGGPKPTPLGVTRDIIASGKAMDLYTGLSAGLLRQAVYTTARIGCFDTFMSRLSARAKEKGQSVGFKERASAGLAAGGLAAMIGNPADLALIRMQSDGLKPVAERKNYKSVIDALGGIARNEGVAALWAGAAPTVVRAMALNFGQLAFFSEAKAQLKARTQWSSKVQTLSASAIAGFFASFFSLPFDFVKTRLQKQTRGPDGKLPYNGMVDCFAKVAKQEGVFRFYRGFGTYYVRIAPHAMVTLLVADYLGWLTK</sequence>
<accession>P0C582</accession>
<accession>A7UWG7</accession>
<accession>Q7S6P3</accession>
<accession>V5IKM2</accession>
<dbReference type="EMBL" id="CM002241">
    <property type="protein sequence ID" value="ESA42143.1"/>
    <property type="molecule type" value="Genomic_DNA"/>
</dbReference>
<dbReference type="EMBL" id="CM002241">
    <property type="protein sequence ID" value="ESA42144.1"/>
    <property type="molecule type" value="Genomic_DNA"/>
</dbReference>
<dbReference type="RefSeq" id="XP_011395026.1">
    <property type="nucleotide sequence ID" value="XM_011396724.1"/>
</dbReference>
<dbReference type="RefSeq" id="XP_011395027.1">
    <property type="nucleotide sequence ID" value="XM_011396725.1"/>
</dbReference>
<dbReference type="SMR" id="P0C582"/>
<dbReference type="STRING" id="367110.P0C582"/>
<dbReference type="PaxDb" id="5141-EFNCRP00000004518"/>
<dbReference type="EnsemblFungi" id="ESA42143">
    <property type="protein sequence ID" value="ESA42143"/>
    <property type="gene ID" value="NCU10732"/>
</dbReference>
<dbReference type="EnsemblFungi" id="ESA42144">
    <property type="protein sequence ID" value="ESA42144"/>
    <property type="gene ID" value="NCU10732"/>
</dbReference>
<dbReference type="GeneID" id="5847541"/>
<dbReference type="KEGG" id="ncr:NCU10732"/>
<dbReference type="VEuPathDB" id="FungiDB:NCU10732"/>
<dbReference type="HOGENOM" id="CLU_015166_14_1_1"/>
<dbReference type="InParanoid" id="P0C582"/>
<dbReference type="OMA" id="TLWRGAI"/>
<dbReference type="OrthoDB" id="756301at2759"/>
<dbReference type="Proteomes" id="UP000001805">
    <property type="component" value="Chromosome 5, Linkage Group VI"/>
</dbReference>
<dbReference type="GO" id="GO:0005743">
    <property type="term" value="C:mitochondrial inner membrane"/>
    <property type="evidence" value="ECO:0007669"/>
    <property type="project" value="UniProtKB-SubCell"/>
</dbReference>
<dbReference type="GO" id="GO:0022857">
    <property type="term" value="F:transmembrane transporter activity"/>
    <property type="evidence" value="ECO:0000318"/>
    <property type="project" value="GO_Central"/>
</dbReference>
<dbReference type="FunFam" id="1.50.40.10:FF:000009">
    <property type="entry name" value="Mitochondrial 2-oxoglutarate/malate carrier protein"/>
    <property type="match status" value="1"/>
</dbReference>
<dbReference type="Gene3D" id="1.50.40.10">
    <property type="entry name" value="Mitochondrial carrier domain"/>
    <property type="match status" value="1"/>
</dbReference>
<dbReference type="InterPro" id="IPR002067">
    <property type="entry name" value="Mit_carrier"/>
</dbReference>
<dbReference type="InterPro" id="IPR050391">
    <property type="entry name" value="Mito_Metabolite_Transporter"/>
</dbReference>
<dbReference type="InterPro" id="IPR018108">
    <property type="entry name" value="Mitochondrial_sb/sol_carrier"/>
</dbReference>
<dbReference type="InterPro" id="IPR023395">
    <property type="entry name" value="Mt_carrier_dom_sf"/>
</dbReference>
<dbReference type="PANTHER" id="PTHR45618">
    <property type="entry name" value="MITOCHONDRIAL DICARBOXYLATE CARRIER-RELATED"/>
    <property type="match status" value="1"/>
</dbReference>
<dbReference type="Pfam" id="PF00153">
    <property type="entry name" value="Mito_carr"/>
    <property type="match status" value="3"/>
</dbReference>
<dbReference type="PRINTS" id="PR00926">
    <property type="entry name" value="MITOCARRIER"/>
</dbReference>
<dbReference type="SUPFAM" id="SSF103506">
    <property type="entry name" value="Mitochondrial carrier"/>
    <property type="match status" value="1"/>
</dbReference>
<dbReference type="PROSITE" id="PS50920">
    <property type="entry name" value="SOLCAR"/>
    <property type="match status" value="3"/>
</dbReference>
<feature type="chain" id="PRO_0000295333" description="Putative mitochondrial 2-oxoglutarate/malate carrier protein">
    <location>
        <begin position="1"/>
        <end position="331"/>
    </location>
</feature>
<feature type="transmembrane region" description="Helical; Name=1" evidence="2">
    <location>
        <begin position="42"/>
        <end position="62"/>
    </location>
</feature>
<feature type="transmembrane region" description="Helical; Name=2" evidence="2">
    <location>
        <begin position="103"/>
        <end position="121"/>
    </location>
</feature>
<feature type="transmembrane region" description="Helical; Name=3" evidence="2">
    <location>
        <begin position="148"/>
        <end position="168"/>
    </location>
</feature>
<feature type="transmembrane region" description="Helical; Name=4" evidence="2">
    <location>
        <begin position="199"/>
        <end position="219"/>
    </location>
</feature>
<feature type="transmembrane region" description="Helical; Name=5" evidence="2">
    <location>
        <begin position="245"/>
        <end position="265"/>
    </location>
</feature>
<feature type="transmembrane region" description="Helical; Name=6" evidence="2">
    <location>
        <begin position="309"/>
        <end position="329"/>
    </location>
</feature>
<feature type="repeat" description="Solcar 1">
    <location>
        <begin position="39"/>
        <end position="128"/>
    </location>
</feature>
<feature type="repeat" description="Solcar 2">
    <location>
        <begin position="140"/>
        <end position="231"/>
    </location>
</feature>
<feature type="repeat" description="Solcar 3">
    <location>
        <begin position="239"/>
        <end position="329"/>
    </location>
</feature>
<organism>
    <name type="scientific">Neurospora crassa (strain ATCC 24698 / 74-OR23-1A / CBS 708.71 / DSM 1257 / FGSC 987)</name>
    <dbReference type="NCBI Taxonomy" id="367110"/>
    <lineage>
        <taxon>Eukaryota</taxon>
        <taxon>Fungi</taxon>
        <taxon>Dikarya</taxon>
        <taxon>Ascomycota</taxon>
        <taxon>Pezizomycotina</taxon>
        <taxon>Sordariomycetes</taxon>
        <taxon>Sordariomycetidae</taxon>
        <taxon>Sordariales</taxon>
        <taxon>Sordariaceae</taxon>
        <taxon>Neurospora</taxon>
    </lineage>
</organism>
<gene>
    <name type="primary">mic-33</name>
    <name type="ORF">NCU04792</name>
    <name type="ORF">NCU10732</name>
</gene>